<protein>
    <recommendedName>
        <fullName>DNA translocase FtsK 1</fullName>
    </recommendedName>
</protein>
<comment type="function">
    <text evidence="1">Essential cell division protein that coordinates cell division and chromosome segregation. The N-terminus is involved in assembly of the cell-division machinery. The C-terminus functions as a DNA motor that moves dsDNA in an ATP-dependent manner towards the dif recombination site, which is located within the replication terminus region. Translocation stops specifically at Xer-dif sites, where FtsK interacts with the Xer recombinase, allowing activation of chromosome unlinking by recombination. FtsK orienting polar sequences (KOPS) guide the direction of DNA translocation. FtsK can remove proteins from DNA as it translocates, but translocation stops specifically at XerCD-dif site, thereby preventing removal of XerC and XerD from dif (By similarity).</text>
</comment>
<comment type="subunit">
    <text evidence="1">Homohexamer. Forms a ring that surrounds DNA (By similarity).</text>
</comment>
<comment type="subcellular location">
    <subcellularLocation>
        <location evidence="1">Cell inner membrane</location>
        <topology evidence="1">Multi-pass membrane protein</topology>
    </subcellularLocation>
    <text evidence="1">Located at the septum.</text>
</comment>
<comment type="domain">
    <text evidence="1">Consists of an N-terminal domain, which is sufficient for the localization to the septal ring and is required for cell division, followed by a linker domain, and a C-terminal domain, which forms the translocation motor involved in chromosome segregation. The C-terminal domain can be further subdivided into alpha, beta and gamma subdomains. The alpha and beta subdomains multimerise to produce a hexameric ring, contain the nucleotide binding motif and form the DNA pump. The gamma subdomain is a regulatory subdomain that controls translocation of DNA by recognition of KOPS motifs and interacts with XerD recombinase (By similarity).</text>
</comment>
<comment type="similarity">
    <text evidence="5">Belongs to the FtsK/SpoIIIE/SftA family.</text>
</comment>
<name>FTSK1_NEIMB</name>
<proteinExistence type="inferred from homology"/>
<sequence length="812" mass="87958">MTEKSHKKTAKGRAGSPSPTSARNKKADNGARGNKVSERLKAVKELQKTETKKARPEHVVNLIGDALWLMGLAATLYLAISLISFDMGDPSWSHSSPVVEDVANWGGLFGAYVADVGYYLFGWSFWWWIAAACVVLYKNFRLHAKQTENEAYNHKIAAAALFVLTVFSPVLEYFVLGGKYADSLPVGAGGMVGIRVGAVFAWLLGKSGSLLIILVVLLLSLSLLVQISWLEFLNGAGRAVQNRLSALSGKVMALGKRRPNTKTDGVDTQNTRRMVKEAKNITAKPVALPEGSSSNRKSVAVSVAPPPKIQVSLFEDDEPRQAGEYHKPTLNLLRIPDSEPVSINPAELERTAELIESKLAEFGIGVQVVSATSGPVITRYEIEPAQGVKGSQIVALSKDLARSMSLQSVRIVETIAGKNTMGIELPNDKRQDVMLSEILSSPVFAEAKSKLTVALGKDIAGTPVVGDLAKMPHLLVAGMTGSGKSVGVNGMIMSMLFKATPDEVRFIMIDPKMLELSIYDGIPHLLCPVVTDMREAGQALNWCVAEMEKRYRLLSHAGVRNLEGFNQKVEAAKAAGKPLLNPFSLNPDEPEPLEKLPLIVVVIDELADLMMTERKAVEQQIARLAQKARAAGIHMIVATQRPSVDVVTGLIKANIPTRMAFTVQSKIDSRTILDQMGADELLKYGDSLFLQPGSAEPTRLQGAFVSDDEVHQVVNYVKSQAPADYIEGLLSGEAALETANIVNPNADSDELFDQAVAYVLESKKTSISSLQRQLRIGYNRAANLMEALENAGVVSSTDLNGSRKILAHKDHL</sequence>
<keyword id="KW-0067">ATP-binding</keyword>
<keyword id="KW-0131">Cell cycle</keyword>
<keyword id="KW-0132">Cell division</keyword>
<keyword id="KW-0997">Cell inner membrane</keyword>
<keyword id="KW-1003">Cell membrane</keyword>
<keyword id="KW-0159">Chromosome partition</keyword>
<keyword id="KW-0238">DNA-binding</keyword>
<keyword id="KW-0472">Membrane</keyword>
<keyword id="KW-0547">Nucleotide-binding</keyword>
<keyword id="KW-1185">Reference proteome</keyword>
<keyword id="KW-0812">Transmembrane</keyword>
<keyword id="KW-1133">Transmembrane helix</keyword>
<feature type="chain" id="PRO_0000098274" description="DNA translocase FtsK 1">
    <location>
        <begin position="1"/>
        <end position="812"/>
    </location>
</feature>
<feature type="transmembrane region" description="Helical" evidence="2">
    <location>
        <begin position="63"/>
        <end position="83"/>
    </location>
</feature>
<feature type="transmembrane region" description="Helical" evidence="2">
    <location>
        <begin position="116"/>
        <end position="136"/>
    </location>
</feature>
<feature type="transmembrane region" description="Helical" evidence="2">
    <location>
        <begin position="156"/>
        <end position="176"/>
    </location>
</feature>
<feature type="transmembrane region" description="Helical" evidence="2">
    <location>
        <begin position="184"/>
        <end position="204"/>
    </location>
</feature>
<feature type="transmembrane region" description="Helical" evidence="2">
    <location>
        <begin position="210"/>
        <end position="230"/>
    </location>
</feature>
<feature type="topological domain" description="Cytoplasmic" evidence="2">
    <location>
        <begin position="231"/>
        <end position="812"/>
    </location>
</feature>
<feature type="domain" description="FtsK" evidence="3">
    <location>
        <begin position="461"/>
        <end position="670"/>
    </location>
</feature>
<feature type="region of interest" description="Disordered" evidence="4">
    <location>
        <begin position="1"/>
        <end position="36"/>
    </location>
</feature>
<feature type="compositionally biased region" description="Basic residues" evidence="4">
    <location>
        <begin position="1"/>
        <end position="11"/>
    </location>
</feature>
<feature type="compositionally biased region" description="Basic and acidic residues" evidence="4">
    <location>
        <begin position="25"/>
        <end position="36"/>
    </location>
</feature>
<feature type="binding site" evidence="3">
    <location>
        <begin position="481"/>
        <end position="486"/>
    </location>
    <ligand>
        <name>ATP</name>
        <dbReference type="ChEBI" id="CHEBI:30616"/>
    </ligand>
</feature>
<reference key="1">
    <citation type="journal article" date="2000" name="Science">
        <title>Complete genome sequence of Neisseria meningitidis serogroup B strain MC58.</title>
        <authorList>
            <person name="Tettelin H."/>
            <person name="Saunders N.J."/>
            <person name="Heidelberg J.F."/>
            <person name="Jeffries A.C."/>
            <person name="Nelson K.E."/>
            <person name="Eisen J.A."/>
            <person name="Ketchum K.A."/>
            <person name="Hood D.W."/>
            <person name="Peden J.F."/>
            <person name="Dodson R.J."/>
            <person name="Nelson W.C."/>
            <person name="Gwinn M.L."/>
            <person name="DeBoy R.T."/>
            <person name="Peterson J.D."/>
            <person name="Hickey E.K."/>
            <person name="Haft D.H."/>
            <person name="Salzberg S.L."/>
            <person name="White O."/>
            <person name="Fleischmann R.D."/>
            <person name="Dougherty B.A."/>
            <person name="Mason T.M."/>
            <person name="Ciecko A."/>
            <person name="Parksey D.S."/>
            <person name="Blair E."/>
            <person name="Cittone H."/>
            <person name="Clark E.B."/>
            <person name="Cotton M.D."/>
            <person name="Utterback T.R."/>
            <person name="Khouri H.M."/>
            <person name="Qin H."/>
            <person name="Vamathevan J.J."/>
            <person name="Gill J."/>
            <person name="Scarlato V."/>
            <person name="Masignani V."/>
            <person name="Pizza M."/>
            <person name="Grandi G."/>
            <person name="Sun L."/>
            <person name="Smith H.O."/>
            <person name="Fraser C.M."/>
            <person name="Moxon E.R."/>
            <person name="Rappuoli R."/>
            <person name="Venter J.C."/>
        </authorList>
    </citation>
    <scope>NUCLEOTIDE SEQUENCE [LARGE SCALE GENOMIC DNA]</scope>
    <source>
        <strain>ATCC BAA-335 / MC58</strain>
    </source>
</reference>
<dbReference type="EMBL" id="AE002098">
    <property type="protein sequence ID" value="AAF41689.1"/>
    <property type="molecule type" value="Genomic_DNA"/>
</dbReference>
<dbReference type="PIR" id="A81096">
    <property type="entry name" value="A81096"/>
</dbReference>
<dbReference type="RefSeq" id="NP_274333.1">
    <property type="nucleotide sequence ID" value="NC_003112.2"/>
</dbReference>
<dbReference type="RefSeq" id="WP_002225165.1">
    <property type="nucleotide sequence ID" value="NC_003112.2"/>
</dbReference>
<dbReference type="SMR" id="Q9JZ36"/>
<dbReference type="FunCoup" id="Q9JZ36">
    <property type="interactions" value="130"/>
</dbReference>
<dbReference type="STRING" id="122586.NMB1314"/>
<dbReference type="PaxDb" id="122586-NMB1314"/>
<dbReference type="KEGG" id="nme:NMB1314"/>
<dbReference type="PATRIC" id="fig|122586.8.peg.1648"/>
<dbReference type="HOGENOM" id="CLU_001981_9_7_4"/>
<dbReference type="InParanoid" id="Q9JZ36"/>
<dbReference type="OrthoDB" id="9807790at2"/>
<dbReference type="Proteomes" id="UP000000425">
    <property type="component" value="Chromosome"/>
</dbReference>
<dbReference type="GO" id="GO:0005886">
    <property type="term" value="C:plasma membrane"/>
    <property type="evidence" value="ECO:0007669"/>
    <property type="project" value="UniProtKB-SubCell"/>
</dbReference>
<dbReference type="GO" id="GO:0005524">
    <property type="term" value="F:ATP binding"/>
    <property type="evidence" value="ECO:0007669"/>
    <property type="project" value="UniProtKB-KW"/>
</dbReference>
<dbReference type="GO" id="GO:0003677">
    <property type="term" value="F:DNA binding"/>
    <property type="evidence" value="ECO:0007669"/>
    <property type="project" value="UniProtKB-KW"/>
</dbReference>
<dbReference type="GO" id="GO:0015616">
    <property type="term" value="F:DNA translocase activity"/>
    <property type="evidence" value="ECO:0000318"/>
    <property type="project" value="GO_Central"/>
</dbReference>
<dbReference type="GO" id="GO:0051301">
    <property type="term" value="P:cell division"/>
    <property type="evidence" value="ECO:0007669"/>
    <property type="project" value="UniProtKB-KW"/>
</dbReference>
<dbReference type="GO" id="GO:0007059">
    <property type="term" value="P:chromosome segregation"/>
    <property type="evidence" value="ECO:0007669"/>
    <property type="project" value="UniProtKB-KW"/>
</dbReference>
<dbReference type="CDD" id="cd01127">
    <property type="entry name" value="TrwB_TraG_TraD_VirD4"/>
    <property type="match status" value="1"/>
</dbReference>
<dbReference type="FunFam" id="3.40.50.300:FF:000209">
    <property type="entry name" value="Cell division protein FtsK"/>
    <property type="match status" value="1"/>
</dbReference>
<dbReference type="Gene3D" id="3.30.980.40">
    <property type="match status" value="1"/>
</dbReference>
<dbReference type="Gene3D" id="3.40.50.300">
    <property type="entry name" value="P-loop containing nucleotide triphosphate hydrolases"/>
    <property type="match status" value="1"/>
</dbReference>
<dbReference type="Gene3D" id="1.10.10.10">
    <property type="entry name" value="Winged helix-like DNA-binding domain superfamily/Winged helix DNA-binding domain"/>
    <property type="match status" value="1"/>
</dbReference>
<dbReference type="InterPro" id="IPR050206">
    <property type="entry name" value="FtsK/SpoIIIE/SftA"/>
</dbReference>
<dbReference type="InterPro" id="IPR025199">
    <property type="entry name" value="FtsK_4TM"/>
</dbReference>
<dbReference type="InterPro" id="IPR041027">
    <property type="entry name" value="FtsK_alpha"/>
</dbReference>
<dbReference type="InterPro" id="IPR002543">
    <property type="entry name" value="FtsK_dom"/>
</dbReference>
<dbReference type="InterPro" id="IPR018541">
    <property type="entry name" value="Ftsk_gamma"/>
</dbReference>
<dbReference type="InterPro" id="IPR027417">
    <property type="entry name" value="P-loop_NTPase"/>
</dbReference>
<dbReference type="InterPro" id="IPR036388">
    <property type="entry name" value="WH-like_DNA-bd_sf"/>
</dbReference>
<dbReference type="InterPro" id="IPR036390">
    <property type="entry name" value="WH_DNA-bd_sf"/>
</dbReference>
<dbReference type="PANTHER" id="PTHR22683:SF41">
    <property type="entry name" value="DNA TRANSLOCASE FTSK"/>
    <property type="match status" value="1"/>
</dbReference>
<dbReference type="PANTHER" id="PTHR22683">
    <property type="entry name" value="SPORULATION PROTEIN RELATED"/>
    <property type="match status" value="1"/>
</dbReference>
<dbReference type="Pfam" id="PF13491">
    <property type="entry name" value="FtsK_4TM"/>
    <property type="match status" value="1"/>
</dbReference>
<dbReference type="Pfam" id="PF17854">
    <property type="entry name" value="FtsK_alpha"/>
    <property type="match status" value="1"/>
</dbReference>
<dbReference type="Pfam" id="PF09397">
    <property type="entry name" value="FtsK_gamma"/>
    <property type="match status" value="1"/>
</dbReference>
<dbReference type="Pfam" id="PF01580">
    <property type="entry name" value="FtsK_SpoIIIE"/>
    <property type="match status" value="1"/>
</dbReference>
<dbReference type="SMART" id="SM00843">
    <property type="entry name" value="Ftsk_gamma"/>
    <property type="match status" value="1"/>
</dbReference>
<dbReference type="SUPFAM" id="SSF52540">
    <property type="entry name" value="P-loop containing nucleoside triphosphate hydrolases"/>
    <property type="match status" value="1"/>
</dbReference>
<dbReference type="SUPFAM" id="SSF46785">
    <property type="entry name" value="Winged helix' DNA-binding domain"/>
    <property type="match status" value="1"/>
</dbReference>
<dbReference type="PROSITE" id="PS50901">
    <property type="entry name" value="FTSK"/>
    <property type="match status" value="1"/>
</dbReference>
<gene>
    <name type="primary">ftsK1</name>
    <name type="ordered locus">NMB1314</name>
</gene>
<evidence type="ECO:0000250" key="1"/>
<evidence type="ECO:0000255" key="2"/>
<evidence type="ECO:0000255" key="3">
    <source>
        <dbReference type="PROSITE-ProRule" id="PRU00289"/>
    </source>
</evidence>
<evidence type="ECO:0000256" key="4">
    <source>
        <dbReference type="SAM" id="MobiDB-lite"/>
    </source>
</evidence>
<evidence type="ECO:0000305" key="5"/>
<accession>Q9JZ36</accession>
<organism>
    <name type="scientific">Neisseria meningitidis serogroup B (strain ATCC BAA-335 / MC58)</name>
    <dbReference type="NCBI Taxonomy" id="122586"/>
    <lineage>
        <taxon>Bacteria</taxon>
        <taxon>Pseudomonadati</taxon>
        <taxon>Pseudomonadota</taxon>
        <taxon>Betaproteobacteria</taxon>
        <taxon>Neisseriales</taxon>
        <taxon>Neisseriaceae</taxon>
        <taxon>Neisseria</taxon>
    </lineage>
</organism>